<protein>
    <recommendedName>
        <fullName evidence="1">ATP synthase F(0) complex subunit 8</fullName>
    </recommendedName>
    <alternativeName>
        <fullName>A6L</fullName>
    </alternativeName>
    <alternativeName>
        <fullName>F-ATPase subunit 8</fullName>
    </alternativeName>
</protein>
<dbReference type="EMBL" id="V00654">
    <property type="protein sequence ID" value="CAA24001.1"/>
    <property type="molecule type" value="Genomic_DNA"/>
</dbReference>
<dbReference type="EMBL" id="AF490528">
    <property type="protein sequence ID" value="AAM08333.1"/>
    <property type="molecule type" value="Genomic_DNA"/>
</dbReference>
<dbReference type="EMBL" id="AF490529">
    <property type="protein sequence ID" value="AAM08346.1"/>
    <property type="molecule type" value="Genomic_DNA"/>
</dbReference>
<dbReference type="EMBL" id="AF493541">
    <property type="protein sequence ID" value="AAM12793.1"/>
    <property type="molecule type" value="Genomic_DNA"/>
</dbReference>
<dbReference type="EMBL" id="AF493542">
    <property type="protein sequence ID" value="AAM12806.1"/>
    <property type="molecule type" value="Genomic_DNA"/>
</dbReference>
<dbReference type="PIR" id="A01063">
    <property type="entry name" value="PWBO8"/>
</dbReference>
<dbReference type="RefSeq" id="YP_209209.1">
    <property type="nucleotide sequence ID" value="NC_006853.1"/>
</dbReference>
<dbReference type="PDB" id="6ZBB">
    <property type="method" value="EM"/>
    <property type="resolution" value="3.61 A"/>
    <property type="chains" value="8=1-66"/>
</dbReference>
<dbReference type="PDB" id="6ZIQ">
    <property type="method" value="EM"/>
    <property type="resolution" value="4.33 A"/>
    <property type="chains" value="8=1-66"/>
</dbReference>
<dbReference type="PDB" id="6ZIT">
    <property type="method" value="EM"/>
    <property type="resolution" value="3.49 A"/>
    <property type="chains" value="8=1-66"/>
</dbReference>
<dbReference type="PDB" id="6ZIU">
    <property type="method" value="EM"/>
    <property type="resolution" value="6.02 A"/>
    <property type="chains" value="8=1-66"/>
</dbReference>
<dbReference type="PDB" id="6ZPO">
    <property type="method" value="EM"/>
    <property type="resolution" value="4.00 A"/>
    <property type="chains" value="8=1-66"/>
</dbReference>
<dbReference type="PDB" id="6ZQM">
    <property type="method" value="EM"/>
    <property type="resolution" value="3.29 A"/>
    <property type="chains" value="8=1-66"/>
</dbReference>
<dbReference type="PDB" id="6ZQN">
    <property type="method" value="EM"/>
    <property type="resolution" value="4.00 A"/>
    <property type="chains" value="8=1-66"/>
</dbReference>
<dbReference type="PDB" id="7AJB">
    <property type="method" value="EM"/>
    <property type="resolution" value="9.20 A"/>
    <property type="chains" value="8/A8=1-66"/>
</dbReference>
<dbReference type="PDB" id="7AJC">
    <property type="method" value="EM"/>
    <property type="resolution" value="11.90 A"/>
    <property type="chains" value="8/A8=1-66"/>
</dbReference>
<dbReference type="PDB" id="7AJD">
    <property type="method" value="EM"/>
    <property type="resolution" value="9.00 A"/>
    <property type="chains" value="8/A8=1-66"/>
</dbReference>
<dbReference type="PDB" id="7AJE">
    <property type="method" value="EM"/>
    <property type="resolution" value="9.40 A"/>
    <property type="chains" value="8/A8=1-66"/>
</dbReference>
<dbReference type="PDB" id="7AJF">
    <property type="method" value="EM"/>
    <property type="resolution" value="8.45 A"/>
    <property type="chains" value="8/A8=1-66"/>
</dbReference>
<dbReference type="PDB" id="7AJG">
    <property type="method" value="EM"/>
    <property type="resolution" value="10.70 A"/>
    <property type="chains" value="8/A8=1-66"/>
</dbReference>
<dbReference type="PDB" id="7AJH">
    <property type="method" value="EM"/>
    <property type="resolution" value="9.70 A"/>
    <property type="chains" value="8/A8=1-66"/>
</dbReference>
<dbReference type="PDB" id="7AJI">
    <property type="method" value="EM"/>
    <property type="resolution" value="11.40 A"/>
    <property type="chains" value="8/A8=1-66"/>
</dbReference>
<dbReference type="PDB" id="7AJJ">
    <property type="method" value="EM"/>
    <property type="resolution" value="13.10 A"/>
    <property type="chains" value="8/A8=1-66"/>
</dbReference>
<dbReference type="PDBsum" id="6ZBB"/>
<dbReference type="PDBsum" id="6ZIQ"/>
<dbReference type="PDBsum" id="6ZIT"/>
<dbReference type="PDBsum" id="6ZIU"/>
<dbReference type="PDBsum" id="6ZPO"/>
<dbReference type="PDBsum" id="6ZQM"/>
<dbReference type="PDBsum" id="6ZQN"/>
<dbReference type="PDBsum" id="7AJB"/>
<dbReference type="PDBsum" id="7AJC"/>
<dbReference type="PDBsum" id="7AJD"/>
<dbReference type="PDBsum" id="7AJE"/>
<dbReference type="PDBsum" id="7AJF"/>
<dbReference type="PDBsum" id="7AJG"/>
<dbReference type="PDBsum" id="7AJH"/>
<dbReference type="PDBsum" id="7AJI"/>
<dbReference type="PDBsum" id="7AJJ"/>
<dbReference type="EMDB" id="EMD-11149"/>
<dbReference type="EMDB" id="EMD-11228"/>
<dbReference type="EMDB" id="EMD-11229"/>
<dbReference type="EMDB" id="EMD-11230"/>
<dbReference type="EMDB" id="EMD-11342"/>
<dbReference type="EMDB" id="EMD-11368"/>
<dbReference type="EMDB" id="EMD-11369"/>
<dbReference type="EMDB" id="EMD-11428"/>
<dbReference type="EMDB" id="EMD-11429"/>
<dbReference type="EMDB" id="EMD-11430"/>
<dbReference type="SMR" id="P03929"/>
<dbReference type="CORUM" id="P03929"/>
<dbReference type="FunCoup" id="P03929">
    <property type="interactions" value="110"/>
</dbReference>
<dbReference type="IntAct" id="P03929">
    <property type="interactions" value="2"/>
</dbReference>
<dbReference type="MINT" id="P03929"/>
<dbReference type="STRING" id="9913.ENSBTAP00000053143"/>
<dbReference type="PaxDb" id="9913-ENSBTAP00000053143"/>
<dbReference type="PeptideAtlas" id="P03929"/>
<dbReference type="Ensembl" id="ENSBTAT00000060553.1">
    <property type="protein sequence ID" value="ENSBTAP00000053143.1"/>
    <property type="gene ID" value="ENSBTAG00000043564.1"/>
</dbReference>
<dbReference type="GeneID" id="3283881"/>
<dbReference type="KEGG" id="bta:3283881"/>
<dbReference type="CTD" id="4509"/>
<dbReference type="VEuPathDB" id="HostDB:ENSBTAG00000043564"/>
<dbReference type="VGNC" id="VGNC:55737">
    <property type="gene designation" value="MT-ATP8"/>
</dbReference>
<dbReference type="eggNOG" id="ENOG502T21P">
    <property type="taxonomic scope" value="Eukaryota"/>
</dbReference>
<dbReference type="GeneTree" id="ENSGT00390000008771"/>
<dbReference type="HOGENOM" id="CLU_2811757_0_0_1"/>
<dbReference type="InParanoid" id="P03929"/>
<dbReference type="OMA" id="LDTSTWF"/>
<dbReference type="OrthoDB" id="9835073at2759"/>
<dbReference type="TreeFam" id="TF343854"/>
<dbReference type="Reactome" id="R-BTA-163210">
    <property type="pathway name" value="Formation of ATP by chemiosmotic coupling"/>
</dbReference>
<dbReference type="Reactome" id="R-BTA-8949613">
    <property type="pathway name" value="Cristae formation"/>
</dbReference>
<dbReference type="Proteomes" id="UP000009136">
    <property type="component" value="Mitochondrion MT"/>
</dbReference>
<dbReference type="Bgee" id="ENSBTAG00000043564">
    <property type="expression patterns" value="Expressed in thymus and 103 other cell types or tissues"/>
</dbReference>
<dbReference type="GO" id="GO:0031966">
    <property type="term" value="C:mitochondrial membrane"/>
    <property type="evidence" value="ECO:0007669"/>
    <property type="project" value="UniProtKB-SubCell"/>
</dbReference>
<dbReference type="GO" id="GO:0005739">
    <property type="term" value="C:mitochondrion"/>
    <property type="evidence" value="ECO:0000305"/>
    <property type="project" value="UniProtKB"/>
</dbReference>
<dbReference type="GO" id="GO:0045259">
    <property type="term" value="C:proton-transporting ATP synthase complex"/>
    <property type="evidence" value="ECO:0000314"/>
    <property type="project" value="UniProtKB"/>
</dbReference>
<dbReference type="GO" id="GO:0046933">
    <property type="term" value="F:proton-transporting ATP synthase activity, rotational mechanism"/>
    <property type="evidence" value="ECO:0007669"/>
    <property type="project" value="Ensembl"/>
</dbReference>
<dbReference type="GO" id="GO:0042776">
    <property type="term" value="P:proton motive force-driven mitochondrial ATP synthesis"/>
    <property type="evidence" value="ECO:0007669"/>
    <property type="project" value="Ensembl"/>
</dbReference>
<dbReference type="InterPro" id="IPR039017">
    <property type="entry name" value="ATP8_mammal"/>
</dbReference>
<dbReference type="InterPro" id="IPR001421">
    <property type="entry name" value="ATP8_metazoa"/>
</dbReference>
<dbReference type="PANTHER" id="PTHR13722">
    <property type="entry name" value="ATP SYNTHASE PROTEIN 8"/>
    <property type="match status" value="1"/>
</dbReference>
<dbReference type="PANTHER" id="PTHR13722:SF0">
    <property type="entry name" value="ATP SYNTHASE PROTEIN 8"/>
    <property type="match status" value="1"/>
</dbReference>
<dbReference type="Pfam" id="PF00895">
    <property type="entry name" value="ATP-synt_8"/>
    <property type="match status" value="1"/>
</dbReference>
<gene>
    <name evidence="1" type="primary">MT-ATP8</name>
    <name type="synonym">ATP8</name>
    <name type="synonym">ATPASE8</name>
    <name type="synonym">MTATP8</name>
</gene>
<organism>
    <name type="scientific">Bos taurus</name>
    <name type="common">Bovine</name>
    <dbReference type="NCBI Taxonomy" id="9913"/>
    <lineage>
        <taxon>Eukaryota</taxon>
        <taxon>Metazoa</taxon>
        <taxon>Chordata</taxon>
        <taxon>Craniata</taxon>
        <taxon>Vertebrata</taxon>
        <taxon>Euteleostomi</taxon>
        <taxon>Mammalia</taxon>
        <taxon>Eutheria</taxon>
        <taxon>Laurasiatheria</taxon>
        <taxon>Artiodactyla</taxon>
        <taxon>Ruminantia</taxon>
        <taxon>Pecora</taxon>
        <taxon>Bovidae</taxon>
        <taxon>Bovinae</taxon>
        <taxon>Bos</taxon>
    </lineage>
</organism>
<feature type="chain" id="PRO_0000195495" description="ATP synthase F(0) complex subunit 8">
    <location>
        <begin position="1"/>
        <end position="66"/>
    </location>
</feature>
<feature type="transmembrane region" description="Helical" evidence="4">
    <location>
        <begin position="8"/>
        <end position="24"/>
    </location>
</feature>
<feature type="modified residue" description="N-formylmethionine" evidence="6 8">
    <location>
        <position position="1"/>
    </location>
</feature>
<feature type="modified residue" description="N6-acetyllysine; alternate" evidence="2">
    <location>
        <position position="54"/>
    </location>
</feature>
<feature type="modified residue" description="N6-succinyllysine; alternate" evidence="2">
    <location>
        <position position="54"/>
    </location>
</feature>
<feature type="modified residue" description="N6-acetyllysine" evidence="2">
    <location>
        <position position="57"/>
    </location>
</feature>
<feature type="turn" evidence="11">
    <location>
        <begin position="2"/>
        <end position="4"/>
    </location>
</feature>
<feature type="helix" evidence="11">
    <location>
        <begin position="6"/>
        <end position="8"/>
    </location>
</feature>
<feature type="helix" evidence="11">
    <location>
        <begin position="9"/>
        <end position="28"/>
    </location>
</feature>
<keyword id="KW-0002">3D-structure</keyword>
<keyword id="KW-0007">Acetylation</keyword>
<keyword id="KW-0066">ATP synthesis</keyword>
<keyword id="KW-0138">CF(0)</keyword>
<keyword id="KW-0903">Direct protein sequencing</keyword>
<keyword id="KW-0291">Formylation</keyword>
<keyword id="KW-0375">Hydrogen ion transport</keyword>
<keyword id="KW-0406">Ion transport</keyword>
<keyword id="KW-0472">Membrane</keyword>
<keyword id="KW-0496">Mitochondrion</keyword>
<keyword id="KW-1185">Reference proteome</keyword>
<keyword id="KW-0812">Transmembrane</keyword>
<keyword id="KW-1133">Transmembrane helix</keyword>
<keyword id="KW-0813">Transport</keyword>
<accession>P03929</accession>
<geneLocation type="mitochondrion"/>
<evidence type="ECO:0000250" key="1">
    <source>
        <dbReference type="UniProtKB" id="P03928"/>
    </source>
</evidence>
<evidence type="ECO:0000250" key="2">
    <source>
        <dbReference type="UniProtKB" id="P03930"/>
    </source>
</evidence>
<evidence type="ECO:0000250" key="3">
    <source>
        <dbReference type="UniProtKB" id="P19483"/>
    </source>
</evidence>
<evidence type="ECO:0000255" key="4"/>
<evidence type="ECO:0000269" key="5">
    <source>
    </source>
</evidence>
<evidence type="ECO:0000269" key="6">
    <source>
    </source>
</evidence>
<evidence type="ECO:0000269" key="7">
    <source>
    </source>
</evidence>
<evidence type="ECO:0000269" key="8">
    <source>
    </source>
</evidence>
<evidence type="ECO:0000305" key="9"/>
<evidence type="ECO:0000312" key="10">
    <source>
        <dbReference type="Proteomes" id="UP000009136"/>
    </source>
</evidence>
<evidence type="ECO:0007829" key="11">
    <source>
        <dbReference type="PDB" id="6ZIT"/>
    </source>
</evidence>
<proteinExistence type="evidence at protein level"/>
<reference key="1">
    <citation type="journal article" date="1982" name="J. Mol. Biol.">
        <title>Complete sequence of bovine mitochondrial DNA. Conserved features of the mammalian mitochondrial genome.</title>
        <authorList>
            <person name="Anderson S."/>
            <person name="de Bruijn M.H.L."/>
            <person name="Coulson A.R."/>
            <person name="Eperon I.C."/>
            <person name="Sanger F."/>
            <person name="Young I.G."/>
        </authorList>
    </citation>
    <scope>NUCLEOTIDE SEQUENCE [GENOMIC DNA]</scope>
    <source>
        <strain evidence="10">Hereford</strain>
        <tissue>Heart</tissue>
    </source>
</reference>
<reference key="2">
    <citation type="submission" date="2002-03" db="EMBL/GenBank/DDBJ databases">
        <title>Bos taurus mitochondrial protein coding regions.</title>
        <authorList>
            <person name="Wettstein P.J."/>
        </authorList>
    </citation>
    <scope>NUCLEOTIDE SEQUENCE [GENOMIC DNA]</scope>
    <source>
        <strain>65</strain>
        <strain>66</strain>
        <strain>D</strain>
        <strain>F</strain>
    </source>
</reference>
<reference key="3">
    <citation type="journal article" date="1986" name="EMBO J.">
        <title>Two overlapping genes in bovine mitochondrial DNA encode membrane components of ATP synthase.</title>
        <authorList>
            <person name="Fearnley I.M."/>
            <person name="Walker J.E."/>
        </authorList>
    </citation>
    <scope>PARTIAL PROTEIN SEQUENCE</scope>
</reference>
<reference key="4">
    <citation type="journal article" date="1991" name="Biochemistry">
        <title>Identification of the subunits of F1F0-ATPase from bovine heart mitochondria.</title>
        <authorList>
            <person name="Walker J.E."/>
            <person name="Lutter R."/>
            <person name="Dupuis A."/>
            <person name="Runswick M.J."/>
        </authorList>
    </citation>
    <scope>PROTEIN SEQUENCE OF 1-5</scope>
    <scope>FORMYLATION AT MET-1</scope>
    <source>
        <tissue>Heart</tissue>
    </source>
</reference>
<reference key="5">
    <citation type="journal article" date="2007" name="FEBS Lett.">
        <title>Association of two proteolipids of unknown function with ATP synthase from bovine heart mitochondria.</title>
        <authorList>
            <person name="Chen R."/>
            <person name="Runswick M.J."/>
            <person name="Carroll J."/>
            <person name="Fearnley I.M."/>
            <person name="Walker J.E."/>
        </authorList>
    </citation>
    <scope>IDENTIFICATION IN THE ATP SYNTHASE COMPLEX</scope>
</reference>
<reference key="6">
    <citation type="journal article" date="2015" name="J. Biol. Chem.">
        <title>Organization of Subunits in the Membrane Domain of the Bovine F-ATPase Revealed by Covalent Cross-linking.</title>
        <authorList>
            <person name="Lee J."/>
            <person name="Ding S."/>
            <person name="Walpole T.B."/>
            <person name="Holding A.N."/>
            <person name="Montgomery M.G."/>
            <person name="Fearnley I.M."/>
            <person name="Walker J.E."/>
        </authorList>
    </citation>
    <scope>IDENTIFICATION BY MASS SPECTROMETRY</scope>
    <scope>IDENTIFICATION IN THE ATP SYNTHASE COMPLEX</scope>
</reference>
<sequence>MPQLDTSTWLTMILSMFLTLFIIFQLKVSKHNFYHNPELTPTKMLKQNTPWETKWTKIYLPLLLPL</sequence>
<name>ATP8_BOVIN</name>
<comment type="function">
    <text evidence="1 3">Subunit 8, of the mitochondrial membrane ATP synthase complex (F(1)F(0) ATP synthase or Complex V) that produces ATP from ADP in the presence of a proton gradient across the membrane which is generated by electron transport complexes of the respiratory chain. ATP synthase complex consist of a soluble F(1) head domain - the catalytic core - and a membrane F(1) domain - the membrane proton channel. These two domains are linked by a central stalk rotating inside the F(1) region and a stationary peripheral stalk. During catalysis, ATP synthesis in the catalytic domain of F(1) is coupled via a rotary mechanism of the central stalk subunits to proton translocation (By similarity). In vivo, can only synthesize ATP although its ATP hydrolase activity can be activated artificially in vitro (By similarity). Part of the complex F(0) domain (By similarity).</text>
</comment>
<comment type="subunit">
    <text evidence="1 5 7">Component of the ATP synthase complex composed at least of ATP5F1A/subunit alpha, ATP5F1B/subunit beta, ATP5MC1/subunit c (homooctomer), MT-ATP6/subunit a, MT-ATP8/subunit 8, ATP5ME/subunit e, ATP5MF/subunit f, ATP5MG/subunit g, ATP5MK/subunit k, ATP5MJ/subunit j, ATP5F1C/subunit gamma, ATP5F1D/subunit delta, ATP5F1E/subunit epsilon, ATP5PF/subunit F6, ATP5PB/subunit b, ATP5PD/subunit d, ATP5PO/subunit OSCP (PubMed:17570365, PubMed:25851905). ATP synthase complex consists of a soluble F(1) head domain (subunits alpha(3) and beta(3)) - the catalytic core - and a membrane F(0) domain - the membrane proton channel (subunits c, a, 8, e, f, g, k and j). These two domains are linked by a central stalk (subunits gamma, delta, and epsilon) rotating inside the F1 region and a stationary peripheral stalk (subunits F6, b, d, and OSCP). Interacts with PRICKLE3 (By similarity).</text>
</comment>
<comment type="subcellular location">
    <subcellularLocation>
        <location>Mitochondrion membrane</location>
        <topology>Single-pass membrane protein</topology>
    </subcellularLocation>
</comment>
<comment type="similarity">
    <text evidence="9">Belongs to the ATPase protein 8 family.</text>
</comment>